<organism>
    <name type="scientific">Microcystis aeruginosa (strain NIES-843 / IAM M-2473)</name>
    <dbReference type="NCBI Taxonomy" id="449447"/>
    <lineage>
        <taxon>Bacteria</taxon>
        <taxon>Bacillati</taxon>
        <taxon>Cyanobacteriota</taxon>
        <taxon>Cyanophyceae</taxon>
        <taxon>Oscillatoriophycideae</taxon>
        <taxon>Chroococcales</taxon>
        <taxon>Microcystaceae</taxon>
        <taxon>Microcystis</taxon>
    </lineage>
</organism>
<reference key="1">
    <citation type="journal article" date="2007" name="DNA Res.">
        <title>Complete genomic structure of the bloom-forming toxic cyanobacterium Microcystis aeruginosa NIES-843.</title>
        <authorList>
            <person name="Kaneko T."/>
            <person name="Nakajima N."/>
            <person name="Okamoto S."/>
            <person name="Suzuki I."/>
            <person name="Tanabe Y."/>
            <person name="Tamaoki M."/>
            <person name="Nakamura Y."/>
            <person name="Kasai F."/>
            <person name="Watanabe A."/>
            <person name="Kawashima K."/>
            <person name="Kishida Y."/>
            <person name="Ono A."/>
            <person name="Shimizu Y."/>
            <person name="Takahashi C."/>
            <person name="Minami C."/>
            <person name="Fujishiro T."/>
            <person name="Kohara M."/>
            <person name="Katoh M."/>
            <person name="Nakazaki N."/>
            <person name="Nakayama S."/>
            <person name="Yamada M."/>
            <person name="Tabata S."/>
            <person name="Watanabe M.M."/>
        </authorList>
    </citation>
    <scope>NUCLEOTIDE SEQUENCE [LARGE SCALE GENOMIC DNA]</scope>
    <source>
        <strain>NIES-843 / IAM M-247</strain>
    </source>
</reference>
<dbReference type="EMBL" id="AP009552">
    <property type="protein sequence ID" value="BAG00623.1"/>
    <property type="molecule type" value="Genomic_DNA"/>
</dbReference>
<dbReference type="RefSeq" id="WP_002760284.1">
    <property type="nucleotide sequence ID" value="NC_010296.1"/>
</dbReference>
<dbReference type="SMR" id="B0JQG4"/>
<dbReference type="STRING" id="449447.MAE_08010"/>
<dbReference type="PaxDb" id="449447-MAE_08010"/>
<dbReference type="EnsemblBacteria" id="BAG00623">
    <property type="protein sequence ID" value="BAG00623"/>
    <property type="gene ID" value="MAE_08010"/>
</dbReference>
<dbReference type="GeneID" id="66705275"/>
<dbReference type="KEGG" id="mar:MAE_08010"/>
<dbReference type="eggNOG" id="COG0261">
    <property type="taxonomic scope" value="Bacteria"/>
</dbReference>
<dbReference type="HOGENOM" id="CLU_061463_1_2_3"/>
<dbReference type="BioCyc" id="MAER449447:MAE_RS03575-MONOMER"/>
<dbReference type="Proteomes" id="UP000001510">
    <property type="component" value="Chromosome"/>
</dbReference>
<dbReference type="GO" id="GO:0005737">
    <property type="term" value="C:cytoplasm"/>
    <property type="evidence" value="ECO:0007669"/>
    <property type="project" value="UniProtKB-ARBA"/>
</dbReference>
<dbReference type="GO" id="GO:1990904">
    <property type="term" value="C:ribonucleoprotein complex"/>
    <property type="evidence" value="ECO:0007669"/>
    <property type="project" value="UniProtKB-KW"/>
</dbReference>
<dbReference type="GO" id="GO:0005840">
    <property type="term" value="C:ribosome"/>
    <property type="evidence" value="ECO:0007669"/>
    <property type="project" value="UniProtKB-KW"/>
</dbReference>
<dbReference type="GO" id="GO:0019843">
    <property type="term" value="F:rRNA binding"/>
    <property type="evidence" value="ECO:0007669"/>
    <property type="project" value="UniProtKB-UniRule"/>
</dbReference>
<dbReference type="GO" id="GO:0003735">
    <property type="term" value="F:structural constituent of ribosome"/>
    <property type="evidence" value="ECO:0007669"/>
    <property type="project" value="InterPro"/>
</dbReference>
<dbReference type="GO" id="GO:0006412">
    <property type="term" value="P:translation"/>
    <property type="evidence" value="ECO:0007669"/>
    <property type="project" value="UniProtKB-UniRule"/>
</dbReference>
<dbReference type="HAMAP" id="MF_01363">
    <property type="entry name" value="Ribosomal_bL21"/>
    <property type="match status" value="1"/>
</dbReference>
<dbReference type="InterPro" id="IPR028909">
    <property type="entry name" value="bL21-like"/>
</dbReference>
<dbReference type="InterPro" id="IPR036164">
    <property type="entry name" value="bL21-like_sf"/>
</dbReference>
<dbReference type="InterPro" id="IPR001787">
    <property type="entry name" value="Ribosomal_bL21"/>
</dbReference>
<dbReference type="InterPro" id="IPR018258">
    <property type="entry name" value="Ribosomal_bL21_CS"/>
</dbReference>
<dbReference type="NCBIfam" id="TIGR00061">
    <property type="entry name" value="L21"/>
    <property type="match status" value="1"/>
</dbReference>
<dbReference type="PANTHER" id="PTHR21349">
    <property type="entry name" value="50S RIBOSOMAL PROTEIN L21"/>
    <property type="match status" value="1"/>
</dbReference>
<dbReference type="PANTHER" id="PTHR21349:SF0">
    <property type="entry name" value="LARGE RIBOSOMAL SUBUNIT PROTEIN BL21M"/>
    <property type="match status" value="1"/>
</dbReference>
<dbReference type="Pfam" id="PF00829">
    <property type="entry name" value="Ribosomal_L21p"/>
    <property type="match status" value="1"/>
</dbReference>
<dbReference type="SUPFAM" id="SSF141091">
    <property type="entry name" value="L21p-like"/>
    <property type="match status" value="1"/>
</dbReference>
<dbReference type="PROSITE" id="PS01169">
    <property type="entry name" value="RIBOSOMAL_L21"/>
    <property type="match status" value="1"/>
</dbReference>
<gene>
    <name evidence="1" type="primary">rplU</name>
    <name evidence="1" type="synonym">rpl21</name>
    <name type="ordered locus">MAE_08010</name>
</gene>
<evidence type="ECO:0000255" key="1">
    <source>
        <dbReference type="HAMAP-Rule" id="MF_01363"/>
    </source>
</evidence>
<evidence type="ECO:0000305" key="2"/>
<keyword id="KW-0687">Ribonucleoprotein</keyword>
<keyword id="KW-0689">Ribosomal protein</keyword>
<keyword id="KW-0694">RNA-binding</keyword>
<keyword id="KW-0699">rRNA-binding</keyword>
<accession>B0JQG4</accession>
<feature type="chain" id="PRO_1000086987" description="Large ribosomal subunit protein bL21">
    <location>
        <begin position="1"/>
        <end position="129"/>
    </location>
</feature>
<protein>
    <recommendedName>
        <fullName evidence="1">Large ribosomal subunit protein bL21</fullName>
    </recommendedName>
    <alternativeName>
        <fullName evidence="2">50S ribosomal protein L21</fullName>
    </alternativeName>
</protein>
<comment type="function">
    <text evidence="1">This protein binds to 23S rRNA in the presence of protein L20.</text>
</comment>
<comment type="subunit">
    <text evidence="1">Part of the 50S ribosomal subunit. Contacts protein L20.</text>
</comment>
<comment type="similarity">
    <text evidence="1">Belongs to the bacterial ribosomal protein bL21 family.</text>
</comment>
<proteinExistence type="inferred from homology"/>
<name>RL21_MICAN</name>
<sequence>MSYAIIETGGKQIRVEPGRYYDIELLPVDEQSTHTIDKVLLIHDEDDISIGQPFIEGATVEGTVIQHRRGKKVIVYKMRPKKKTRKKRGHRQEITRFMIDSINYNGKTLVATAATSSAEVVEDSSDEEE</sequence>